<evidence type="ECO:0000250" key="1"/>
<evidence type="ECO:0000255" key="2">
    <source>
        <dbReference type="HAMAP-Rule" id="MF_00118"/>
    </source>
</evidence>
<name>EFTU_STRP1</name>
<gene>
    <name evidence="2" type="primary">tuf</name>
    <name type="ordered locus">SPy_0611</name>
    <name type="ordered locus">M5005_Spy0508</name>
</gene>
<proteinExistence type="inferred from homology"/>
<reference key="1">
    <citation type="journal article" date="2001" name="Proc. Natl. Acad. Sci. U.S.A.">
        <title>Complete genome sequence of an M1 strain of Streptococcus pyogenes.</title>
        <authorList>
            <person name="Ferretti J.J."/>
            <person name="McShan W.M."/>
            <person name="Ajdic D.J."/>
            <person name="Savic D.J."/>
            <person name="Savic G."/>
            <person name="Lyon K."/>
            <person name="Primeaux C."/>
            <person name="Sezate S."/>
            <person name="Suvorov A.N."/>
            <person name="Kenton S."/>
            <person name="Lai H.S."/>
            <person name="Lin S.P."/>
            <person name="Qian Y."/>
            <person name="Jia H.G."/>
            <person name="Najar F.Z."/>
            <person name="Ren Q."/>
            <person name="Zhu H."/>
            <person name="Song L."/>
            <person name="White J."/>
            <person name="Yuan X."/>
            <person name="Clifton S.W."/>
            <person name="Roe B.A."/>
            <person name="McLaughlin R.E."/>
        </authorList>
    </citation>
    <scope>NUCLEOTIDE SEQUENCE [LARGE SCALE GENOMIC DNA]</scope>
    <source>
        <strain>ATCC 700294 / SF370 / Serotype M1</strain>
    </source>
</reference>
<reference key="2">
    <citation type="journal article" date="2005" name="J. Infect. Dis.">
        <title>Evolutionary origin and emergence of a highly successful clone of serotype M1 group A Streptococcus involved multiple horizontal gene transfer events.</title>
        <authorList>
            <person name="Sumby P."/>
            <person name="Porcella S.F."/>
            <person name="Madrigal A.G."/>
            <person name="Barbian K.D."/>
            <person name="Virtaneva K."/>
            <person name="Ricklefs S.M."/>
            <person name="Sturdevant D.E."/>
            <person name="Graham M.R."/>
            <person name="Vuopio-Varkila J."/>
            <person name="Hoe N.P."/>
            <person name="Musser J.M."/>
        </authorList>
    </citation>
    <scope>NUCLEOTIDE SEQUENCE [LARGE SCALE GENOMIC DNA]</scope>
    <source>
        <strain>ATCC BAA-947 / MGAS5005 / Serotype M1</strain>
    </source>
</reference>
<sequence>MAKEKYDRSKPHVNIGTIGHVDHGKTTLTAAITTVLARRLPSSVNQPKDYASIDAAPEERERGITINTAHVEYETATRHYAHIDAPGHADYVKNMITGAAQMDGAILVVASTDGPMPQTREHILLSRQVGVKHLIVFMNKVDLVDDEELLELVEMEIRDLLSEYDFPGDDLPVIQGSALKALEGDTKFEDIIMELMDTVDSYIPEPERDTDKPLLLPVEDVFSITGRGTVASGRIDRGTVRVNDEIEIVGIKEETKKAVVTGVEMFRKQLDEGLAGDNVGILLRGVQRDEIERGQVIAKPSSINPHTKFKGEVYILSKDEGGRHTPFFNNYRPQFYFRTTDVTGSIELPAGTEMVMPGDNVTINVELIHPIAVEQGTTFSIREGGRTVGSGIVSEIEA</sequence>
<accession>P69952</accession>
<accession>P82559</accession>
<accession>Q48ZU2</accession>
<comment type="function">
    <text evidence="2">GTP hydrolase that promotes the GTP-dependent binding of aminoacyl-tRNA to the A-site of ribosomes during protein biosynthesis.</text>
</comment>
<comment type="catalytic activity">
    <reaction evidence="2">
        <text>GTP + H2O = GDP + phosphate + H(+)</text>
        <dbReference type="Rhea" id="RHEA:19669"/>
        <dbReference type="ChEBI" id="CHEBI:15377"/>
        <dbReference type="ChEBI" id="CHEBI:15378"/>
        <dbReference type="ChEBI" id="CHEBI:37565"/>
        <dbReference type="ChEBI" id="CHEBI:43474"/>
        <dbReference type="ChEBI" id="CHEBI:58189"/>
        <dbReference type="EC" id="3.6.5.3"/>
    </reaction>
    <physiologicalReaction direction="left-to-right" evidence="2">
        <dbReference type="Rhea" id="RHEA:19670"/>
    </physiologicalReaction>
</comment>
<comment type="subunit">
    <text evidence="2">Monomer.</text>
</comment>
<comment type="subcellular location">
    <subcellularLocation>
        <location evidence="2">Cytoplasm</location>
    </subcellularLocation>
</comment>
<comment type="similarity">
    <text evidence="2">Belongs to the TRAFAC class translation factor GTPase superfamily. Classic translation factor GTPase family. EF-Tu/EF-1A subfamily.</text>
</comment>
<feature type="chain" id="PRO_0000091409" description="Elongation factor Tu">
    <location>
        <begin position="1"/>
        <end position="398"/>
    </location>
</feature>
<feature type="domain" description="tr-type G">
    <location>
        <begin position="10"/>
        <end position="207"/>
    </location>
</feature>
<feature type="region of interest" description="G1" evidence="1">
    <location>
        <begin position="19"/>
        <end position="26"/>
    </location>
</feature>
<feature type="region of interest" description="G2" evidence="1">
    <location>
        <begin position="63"/>
        <end position="67"/>
    </location>
</feature>
<feature type="region of interest" description="G3" evidence="1">
    <location>
        <begin position="84"/>
        <end position="87"/>
    </location>
</feature>
<feature type="region of interest" description="G4" evidence="1">
    <location>
        <begin position="139"/>
        <end position="142"/>
    </location>
</feature>
<feature type="region of interest" description="G5" evidence="1">
    <location>
        <begin position="177"/>
        <end position="179"/>
    </location>
</feature>
<feature type="binding site" evidence="2">
    <location>
        <begin position="19"/>
        <end position="26"/>
    </location>
    <ligand>
        <name>GTP</name>
        <dbReference type="ChEBI" id="CHEBI:37565"/>
    </ligand>
</feature>
<feature type="binding site" evidence="2">
    <location>
        <position position="26"/>
    </location>
    <ligand>
        <name>Mg(2+)</name>
        <dbReference type="ChEBI" id="CHEBI:18420"/>
    </ligand>
</feature>
<feature type="binding site" evidence="2">
    <location>
        <begin position="84"/>
        <end position="88"/>
    </location>
    <ligand>
        <name>GTP</name>
        <dbReference type="ChEBI" id="CHEBI:37565"/>
    </ligand>
</feature>
<feature type="binding site" evidence="2">
    <location>
        <begin position="139"/>
        <end position="142"/>
    </location>
    <ligand>
        <name>GTP</name>
        <dbReference type="ChEBI" id="CHEBI:37565"/>
    </ligand>
</feature>
<organism>
    <name type="scientific">Streptococcus pyogenes serotype M1</name>
    <dbReference type="NCBI Taxonomy" id="301447"/>
    <lineage>
        <taxon>Bacteria</taxon>
        <taxon>Bacillati</taxon>
        <taxon>Bacillota</taxon>
        <taxon>Bacilli</taxon>
        <taxon>Lactobacillales</taxon>
        <taxon>Streptococcaceae</taxon>
        <taxon>Streptococcus</taxon>
    </lineage>
</organism>
<dbReference type="EC" id="3.6.5.3" evidence="2"/>
<dbReference type="EMBL" id="AE004092">
    <property type="protein sequence ID" value="AAK33586.1"/>
    <property type="molecule type" value="Genomic_DNA"/>
</dbReference>
<dbReference type="EMBL" id="CP000017">
    <property type="protein sequence ID" value="AAZ51126.1"/>
    <property type="molecule type" value="Genomic_DNA"/>
</dbReference>
<dbReference type="RefSeq" id="NP_268865.1">
    <property type="nucleotide sequence ID" value="NC_002737.2"/>
</dbReference>
<dbReference type="SMR" id="P69952"/>
<dbReference type="PaxDb" id="1314-HKU360_00519"/>
<dbReference type="KEGG" id="spy:SPy_0611"/>
<dbReference type="KEGG" id="spz:M5005_Spy0508"/>
<dbReference type="PATRIC" id="fig|160490.10.peg.523"/>
<dbReference type="HOGENOM" id="CLU_007265_0_1_9"/>
<dbReference type="OMA" id="EGDKEWG"/>
<dbReference type="Proteomes" id="UP000000750">
    <property type="component" value="Chromosome"/>
</dbReference>
<dbReference type="GO" id="GO:0005829">
    <property type="term" value="C:cytosol"/>
    <property type="evidence" value="ECO:0007669"/>
    <property type="project" value="TreeGrafter"/>
</dbReference>
<dbReference type="GO" id="GO:0005525">
    <property type="term" value="F:GTP binding"/>
    <property type="evidence" value="ECO:0007669"/>
    <property type="project" value="UniProtKB-UniRule"/>
</dbReference>
<dbReference type="GO" id="GO:0003924">
    <property type="term" value="F:GTPase activity"/>
    <property type="evidence" value="ECO:0007669"/>
    <property type="project" value="InterPro"/>
</dbReference>
<dbReference type="GO" id="GO:0003746">
    <property type="term" value="F:translation elongation factor activity"/>
    <property type="evidence" value="ECO:0007669"/>
    <property type="project" value="UniProtKB-UniRule"/>
</dbReference>
<dbReference type="CDD" id="cd01884">
    <property type="entry name" value="EF_Tu"/>
    <property type="match status" value="1"/>
</dbReference>
<dbReference type="CDD" id="cd03697">
    <property type="entry name" value="EFTU_II"/>
    <property type="match status" value="1"/>
</dbReference>
<dbReference type="CDD" id="cd03707">
    <property type="entry name" value="EFTU_III"/>
    <property type="match status" value="1"/>
</dbReference>
<dbReference type="FunFam" id="2.40.30.10:FF:000001">
    <property type="entry name" value="Elongation factor Tu"/>
    <property type="match status" value="1"/>
</dbReference>
<dbReference type="FunFam" id="3.40.50.300:FF:000003">
    <property type="entry name" value="Elongation factor Tu"/>
    <property type="match status" value="1"/>
</dbReference>
<dbReference type="Gene3D" id="3.40.50.300">
    <property type="entry name" value="P-loop containing nucleotide triphosphate hydrolases"/>
    <property type="match status" value="1"/>
</dbReference>
<dbReference type="Gene3D" id="2.40.30.10">
    <property type="entry name" value="Translation factors"/>
    <property type="match status" value="2"/>
</dbReference>
<dbReference type="HAMAP" id="MF_00118_B">
    <property type="entry name" value="EF_Tu_B"/>
    <property type="match status" value="1"/>
</dbReference>
<dbReference type="InterPro" id="IPR041709">
    <property type="entry name" value="EF-Tu_GTP-bd"/>
</dbReference>
<dbReference type="InterPro" id="IPR050055">
    <property type="entry name" value="EF-Tu_GTPase"/>
</dbReference>
<dbReference type="InterPro" id="IPR004161">
    <property type="entry name" value="EFTu-like_2"/>
</dbReference>
<dbReference type="InterPro" id="IPR033720">
    <property type="entry name" value="EFTU_2"/>
</dbReference>
<dbReference type="InterPro" id="IPR031157">
    <property type="entry name" value="G_TR_CS"/>
</dbReference>
<dbReference type="InterPro" id="IPR027417">
    <property type="entry name" value="P-loop_NTPase"/>
</dbReference>
<dbReference type="InterPro" id="IPR005225">
    <property type="entry name" value="Small_GTP-bd"/>
</dbReference>
<dbReference type="InterPro" id="IPR000795">
    <property type="entry name" value="T_Tr_GTP-bd_dom"/>
</dbReference>
<dbReference type="InterPro" id="IPR009000">
    <property type="entry name" value="Transl_B-barrel_sf"/>
</dbReference>
<dbReference type="InterPro" id="IPR009001">
    <property type="entry name" value="Transl_elong_EF1A/Init_IF2_C"/>
</dbReference>
<dbReference type="InterPro" id="IPR004541">
    <property type="entry name" value="Transl_elong_EFTu/EF1A_bac/org"/>
</dbReference>
<dbReference type="InterPro" id="IPR004160">
    <property type="entry name" value="Transl_elong_EFTu/EF1A_C"/>
</dbReference>
<dbReference type="NCBIfam" id="TIGR00485">
    <property type="entry name" value="EF-Tu"/>
    <property type="match status" value="1"/>
</dbReference>
<dbReference type="NCBIfam" id="NF000766">
    <property type="entry name" value="PRK00049.1"/>
    <property type="match status" value="1"/>
</dbReference>
<dbReference type="NCBIfam" id="NF009372">
    <property type="entry name" value="PRK12735.1"/>
    <property type="match status" value="1"/>
</dbReference>
<dbReference type="NCBIfam" id="NF009373">
    <property type="entry name" value="PRK12736.1"/>
    <property type="match status" value="1"/>
</dbReference>
<dbReference type="NCBIfam" id="TIGR00231">
    <property type="entry name" value="small_GTP"/>
    <property type="match status" value="1"/>
</dbReference>
<dbReference type="PANTHER" id="PTHR43721:SF22">
    <property type="entry name" value="ELONGATION FACTOR TU, MITOCHONDRIAL"/>
    <property type="match status" value="1"/>
</dbReference>
<dbReference type="PANTHER" id="PTHR43721">
    <property type="entry name" value="ELONGATION FACTOR TU-RELATED"/>
    <property type="match status" value="1"/>
</dbReference>
<dbReference type="Pfam" id="PF00009">
    <property type="entry name" value="GTP_EFTU"/>
    <property type="match status" value="1"/>
</dbReference>
<dbReference type="Pfam" id="PF03144">
    <property type="entry name" value="GTP_EFTU_D2"/>
    <property type="match status" value="1"/>
</dbReference>
<dbReference type="Pfam" id="PF03143">
    <property type="entry name" value="GTP_EFTU_D3"/>
    <property type="match status" value="1"/>
</dbReference>
<dbReference type="PRINTS" id="PR00315">
    <property type="entry name" value="ELONGATNFCT"/>
</dbReference>
<dbReference type="SUPFAM" id="SSF50465">
    <property type="entry name" value="EF-Tu/eEF-1alpha/eIF2-gamma C-terminal domain"/>
    <property type="match status" value="1"/>
</dbReference>
<dbReference type="SUPFAM" id="SSF52540">
    <property type="entry name" value="P-loop containing nucleoside triphosphate hydrolases"/>
    <property type="match status" value="1"/>
</dbReference>
<dbReference type="SUPFAM" id="SSF50447">
    <property type="entry name" value="Translation proteins"/>
    <property type="match status" value="1"/>
</dbReference>
<dbReference type="PROSITE" id="PS00301">
    <property type="entry name" value="G_TR_1"/>
    <property type="match status" value="1"/>
</dbReference>
<dbReference type="PROSITE" id="PS51722">
    <property type="entry name" value="G_TR_2"/>
    <property type="match status" value="1"/>
</dbReference>
<keyword id="KW-0963">Cytoplasm</keyword>
<keyword id="KW-0251">Elongation factor</keyword>
<keyword id="KW-0342">GTP-binding</keyword>
<keyword id="KW-0378">Hydrolase</keyword>
<keyword id="KW-0460">Magnesium</keyword>
<keyword id="KW-0479">Metal-binding</keyword>
<keyword id="KW-0547">Nucleotide-binding</keyword>
<keyword id="KW-0648">Protein biosynthesis</keyword>
<keyword id="KW-1185">Reference proteome</keyword>
<protein>
    <recommendedName>
        <fullName evidence="2">Elongation factor Tu</fullName>
        <shortName evidence="2">EF-Tu</shortName>
        <ecNumber evidence="2">3.6.5.3</ecNumber>
    </recommendedName>
</protein>